<comment type="function">
    <text evidence="1">Core subunit of the mitochondrial membrane respiratory chain NADH dehydrogenase (Complex I) which catalyzes electron transfer from NADH through the respiratory chain, using ubiquinone as an electron acceptor. Part of the enzyme membrane arm which is embedded in the lipid bilayer and involved in proton translocation.</text>
</comment>
<comment type="catalytic activity">
    <reaction evidence="1">
        <text>a ubiquinone + NADH + 5 H(+)(in) = a ubiquinol + NAD(+) + 4 H(+)(out)</text>
        <dbReference type="Rhea" id="RHEA:29091"/>
        <dbReference type="Rhea" id="RHEA-COMP:9565"/>
        <dbReference type="Rhea" id="RHEA-COMP:9566"/>
        <dbReference type="ChEBI" id="CHEBI:15378"/>
        <dbReference type="ChEBI" id="CHEBI:16389"/>
        <dbReference type="ChEBI" id="CHEBI:17976"/>
        <dbReference type="ChEBI" id="CHEBI:57540"/>
        <dbReference type="ChEBI" id="CHEBI:57945"/>
        <dbReference type="EC" id="7.1.1.2"/>
    </reaction>
    <physiologicalReaction direction="left-to-right" evidence="1">
        <dbReference type="Rhea" id="RHEA:29092"/>
    </physiologicalReaction>
</comment>
<comment type="subunit">
    <text evidence="2">Core subunit of respiratory chain NADH dehydrogenase (Complex I) which is composed of 45 different subunits.</text>
</comment>
<comment type="subcellular location">
    <subcellularLocation>
        <location evidence="2">Mitochondrion inner membrane</location>
        <topology evidence="3">Multi-pass membrane protein</topology>
    </subcellularLocation>
</comment>
<comment type="similarity">
    <text evidence="4">Belongs to the complex I subunit 4L family.</text>
</comment>
<dbReference type="EC" id="7.1.1.2"/>
<dbReference type="EMBL" id="AF492350">
    <property type="protein sequence ID" value="AAQ06588.1"/>
    <property type="molecule type" value="Genomic_DNA"/>
</dbReference>
<dbReference type="EMBL" id="AY126697">
    <property type="protein sequence ID" value="AAM95738.1"/>
    <property type="molecule type" value="Genomic_DNA"/>
</dbReference>
<dbReference type="RefSeq" id="YP_052705.1">
    <property type="nucleotide sequence ID" value="NC_005971.1"/>
</dbReference>
<dbReference type="SMR" id="Q6EMS3"/>
<dbReference type="GeneID" id="2885969"/>
<dbReference type="KEGG" id="biu:2885969"/>
<dbReference type="CTD" id="4539"/>
<dbReference type="OrthoDB" id="14164at91561"/>
<dbReference type="Proteomes" id="UP000515132">
    <property type="component" value="Mitochondrion MT"/>
</dbReference>
<dbReference type="GO" id="GO:0005743">
    <property type="term" value="C:mitochondrial inner membrane"/>
    <property type="evidence" value="ECO:0000250"/>
    <property type="project" value="UniProtKB"/>
</dbReference>
<dbReference type="GO" id="GO:0045271">
    <property type="term" value="C:respiratory chain complex I"/>
    <property type="evidence" value="ECO:0000250"/>
    <property type="project" value="UniProtKB"/>
</dbReference>
<dbReference type="GO" id="GO:0008137">
    <property type="term" value="F:NADH dehydrogenase (ubiquinone) activity"/>
    <property type="evidence" value="ECO:0000250"/>
    <property type="project" value="UniProtKB"/>
</dbReference>
<dbReference type="GO" id="GO:0042773">
    <property type="term" value="P:ATP synthesis coupled electron transport"/>
    <property type="evidence" value="ECO:0007669"/>
    <property type="project" value="InterPro"/>
</dbReference>
<dbReference type="FunFam" id="1.10.287.3510:FF:000002">
    <property type="entry name" value="NADH-ubiquinone oxidoreductase chain 4L"/>
    <property type="match status" value="1"/>
</dbReference>
<dbReference type="Gene3D" id="1.10.287.3510">
    <property type="match status" value="1"/>
</dbReference>
<dbReference type="InterPro" id="IPR001133">
    <property type="entry name" value="NADH_UbQ_OxRdtase_chain4L/K"/>
</dbReference>
<dbReference type="InterPro" id="IPR039428">
    <property type="entry name" value="NUOK/Mnh_C1-like"/>
</dbReference>
<dbReference type="PANTHER" id="PTHR11434:SF0">
    <property type="entry name" value="NADH-UBIQUINONE OXIDOREDUCTASE CHAIN 4L"/>
    <property type="match status" value="1"/>
</dbReference>
<dbReference type="PANTHER" id="PTHR11434">
    <property type="entry name" value="NADH-UBIQUINONE OXIDOREDUCTASE SUBUNIT ND4L"/>
    <property type="match status" value="1"/>
</dbReference>
<dbReference type="Pfam" id="PF00420">
    <property type="entry name" value="Oxidored_q2"/>
    <property type="match status" value="1"/>
</dbReference>
<evidence type="ECO:0000250" key="1">
    <source>
        <dbReference type="UniProtKB" id="P03901"/>
    </source>
</evidence>
<evidence type="ECO:0000250" key="2">
    <source>
        <dbReference type="UniProtKB" id="P03902"/>
    </source>
</evidence>
<evidence type="ECO:0000255" key="3"/>
<evidence type="ECO:0000305" key="4"/>
<keyword id="KW-0249">Electron transport</keyword>
<keyword id="KW-0472">Membrane</keyword>
<keyword id="KW-0496">Mitochondrion</keyword>
<keyword id="KW-0999">Mitochondrion inner membrane</keyword>
<keyword id="KW-0520">NAD</keyword>
<keyword id="KW-1185">Reference proteome</keyword>
<keyword id="KW-0679">Respiratory chain</keyword>
<keyword id="KW-1278">Translocase</keyword>
<keyword id="KW-0812">Transmembrane</keyword>
<keyword id="KW-1133">Transmembrane helix</keyword>
<keyword id="KW-0813">Transport</keyword>
<keyword id="KW-0830">Ubiquinone</keyword>
<gene>
    <name type="primary">MT-ND4L</name>
    <name type="synonym">MTND4L</name>
    <name type="synonym">NADH4L</name>
    <name type="synonym">ND4L</name>
</gene>
<feature type="chain" id="PRO_0000253525" description="NADH-ubiquinone oxidoreductase chain 4L">
    <location>
        <begin position="1"/>
        <end position="98"/>
    </location>
</feature>
<feature type="transmembrane region" description="Helical" evidence="3">
    <location>
        <begin position="1"/>
        <end position="21"/>
    </location>
</feature>
<feature type="transmembrane region" description="Helical" evidence="3">
    <location>
        <begin position="29"/>
        <end position="49"/>
    </location>
</feature>
<feature type="transmembrane region" description="Helical" evidence="3">
    <location>
        <begin position="61"/>
        <end position="81"/>
    </location>
</feature>
<accession>Q6EMS3</accession>
<proteinExistence type="inferred from homology"/>
<geneLocation type="mitochondrion"/>
<protein>
    <recommendedName>
        <fullName>NADH-ubiquinone oxidoreductase chain 4L</fullName>
        <ecNumber>7.1.1.2</ecNumber>
    </recommendedName>
    <alternativeName>
        <fullName>NADH dehydrogenase subunit 4L</fullName>
    </alternativeName>
</protein>
<organism>
    <name type="scientific">Bos indicus</name>
    <name type="common">Zebu</name>
    <dbReference type="NCBI Taxonomy" id="9915"/>
    <lineage>
        <taxon>Eukaryota</taxon>
        <taxon>Metazoa</taxon>
        <taxon>Chordata</taxon>
        <taxon>Craniata</taxon>
        <taxon>Vertebrata</taxon>
        <taxon>Euteleostomi</taxon>
        <taxon>Mammalia</taxon>
        <taxon>Eutheria</taxon>
        <taxon>Laurasiatheria</taxon>
        <taxon>Artiodactyla</taxon>
        <taxon>Ruminantia</taxon>
        <taxon>Pecora</taxon>
        <taxon>Bovidae</taxon>
        <taxon>Bovinae</taxon>
        <taxon>Bos</taxon>
    </lineage>
</organism>
<sequence length="98" mass="10797">MSMVYMNIMMAFTVSLVGLLMYRSHLMSSLLCLEGMMLSLFVMAALTILNSHFTLASMMPIILLVFAACEAALGLSLLVMVSNTYGTDYVQNLNLLQC</sequence>
<name>NU4LM_BOSIN</name>
<reference key="1">
    <citation type="submission" date="2002-03" db="EMBL/GenBank/DDBJ databases">
        <title>Complete sequence of the Bos indicus mitochondrial genome.</title>
        <authorList>
            <person name="Hiendleder S."/>
            <person name="Lewalski H."/>
            <person name="Wolf E."/>
        </authorList>
    </citation>
    <scope>NUCLEOTIDE SEQUENCE [GENOMIC DNA]</scope>
    <source>
        <tissue>Liver</tissue>
    </source>
</reference>
<reference key="2">
    <citation type="submission" date="2002-06" db="EMBL/GenBank/DDBJ databases">
        <title>The complete mitochondrial genome nucleotide sequence of Bos indicus.</title>
        <authorList>
            <person name="Miretti M.M."/>
            <person name="Pereira H.A. Jr."/>
            <person name="Greggio C."/>
            <person name="Suzuki J. Jr."/>
            <person name="Ferro J.A."/>
            <person name="Ferro M.I."/>
            <person name="Meirelles F."/>
            <person name="Garcia J.M."/>
            <person name="Smith L.C."/>
        </authorList>
    </citation>
    <scope>NUCLEOTIDE SEQUENCE [GENOMIC DNA]</scope>
</reference>